<dbReference type="EC" id="7.1.1.-" evidence="1"/>
<dbReference type="EMBL" id="BX548174">
    <property type="protein sequence ID" value="CAE20018.1"/>
    <property type="molecule type" value="Genomic_DNA"/>
</dbReference>
<dbReference type="RefSeq" id="WP_011133187.1">
    <property type="nucleotide sequence ID" value="NC_005072.1"/>
</dbReference>
<dbReference type="SMR" id="Q7UZU6"/>
<dbReference type="STRING" id="59919.PMM1559"/>
<dbReference type="KEGG" id="pmm:PMM1559"/>
<dbReference type="eggNOG" id="ENOG5033TWM">
    <property type="taxonomic scope" value="Bacteria"/>
</dbReference>
<dbReference type="HOGENOM" id="CLU_087432_0_0_3"/>
<dbReference type="OrthoDB" id="510798at2"/>
<dbReference type="Proteomes" id="UP000001026">
    <property type="component" value="Chromosome"/>
</dbReference>
<dbReference type="GO" id="GO:0031676">
    <property type="term" value="C:plasma membrane-derived thylakoid membrane"/>
    <property type="evidence" value="ECO:0007669"/>
    <property type="project" value="UniProtKB-SubCell"/>
</dbReference>
<dbReference type="GO" id="GO:0016655">
    <property type="term" value="F:oxidoreductase activity, acting on NAD(P)H, quinone or similar compound as acceptor"/>
    <property type="evidence" value="ECO:0007669"/>
    <property type="project" value="UniProtKB-UniRule"/>
</dbReference>
<dbReference type="GO" id="GO:0048038">
    <property type="term" value="F:quinone binding"/>
    <property type="evidence" value="ECO:0007669"/>
    <property type="project" value="UniProtKB-KW"/>
</dbReference>
<dbReference type="HAMAP" id="MF_01353">
    <property type="entry name" value="NDH1_NDH1N"/>
    <property type="match status" value="1"/>
</dbReference>
<dbReference type="InterPro" id="IPR020874">
    <property type="entry name" value="NAD(P)H-quinone_OxRdtase_su_N"/>
</dbReference>
<dbReference type="PANTHER" id="PTHR35515">
    <property type="entry name" value="NAD(P)H-QUINONE OXIDOREDUCTASE SUBUNIT N, CHLOROPLASTIC"/>
    <property type="match status" value="1"/>
</dbReference>
<dbReference type="PANTHER" id="PTHR35515:SF1">
    <property type="entry name" value="NAD(P)H-QUINONE OXIDOREDUCTASE SUBUNIT N, CHLOROPLASTIC"/>
    <property type="match status" value="1"/>
</dbReference>
<dbReference type="Pfam" id="PF11909">
    <property type="entry name" value="NdhN"/>
    <property type="match status" value="1"/>
</dbReference>
<protein>
    <recommendedName>
        <fullName evidence="1">NAD(P)H-quinone oxidoreductase subunit N</fullName>
        <ecNumber evidence="1">7.1.1.-</ecNumber>
    </recommendedName>
    <alternativeName>
        <fullName evidence="1">NAD(P)H dehydrogenase I subunit N</fullName>
        <shortName evidence="1">NDH-1 subunit N</shortName>
        <shortName evidence="1">NDH-N</shortName>
    </alternativeName>
</protein>
<sequence length="156" mass="17662">MPLLLTGKKFHNDLNKNKCLAMFAPLEGGYETRLLRRMRAKGFKTYITSARGLGDPEVFLLKLHGIRPPHLGHQSIGRNGALGEVQQVIPQASELFNENDKDKLLWLLEGQVLSQSELESLIKICTSDNKLKIVVEMGGSRKLEWKSLNDYILNEF</sequence>
<comment type="function">
    <text evidence="1">NDH-1 shuttles electrons from an unknown electron donor, via FMN and iron-sulfur (Fe-S) centers, to quinones in the respiratory and/or the photosynthetic chain. The immediate electron acceptor for the enzyme in this species is believed to be plastoquinone. Couples the redox reaction to proton translocation, and thus conserves the redox energy in a proton gradient. Cyanobacterial NDH-1 also plays a role in inorganic carbon-concentration.</text>
</comment>
<comment type="catalytic activity">
    <reaction evidence="1">
        <text>a plastoquinone + NADH + (n+1) H(+)(in) = a plastoquinol + NAD(+) + n H(+)(out)</text>
        <dbReference type="Rhea" id="RHEA:42608"/>
        <dbReference type="Rhea" id="RHEA-COMP:9561"/>
        <dbReference type="Rhea" id="RHEA-COMP:9562"/>
        <dbReference type="ChEBI" id="CHEBI:15378"/>
        <dbReference type="ChEBI" id="CHEBI:17757"/>
        <dbReference type="ChEBI" id="CHEBI:57540"/>
        <dbReference type="ChEBI" id="CHEBI:57945"/>
        <dbReference type="ChEBI" id="CHEBI:62192"/>
    </reaction>
</comment>
<comment type="catalytic activity">
    <reaction evidence="1">
        <text>a plastoquinone + NADPH + (n+1) H(+)(in) = a plastoquinol + NADP(+) + n H(+)(out)</text>
        <dbReference type="Rhea" id="RHEA:42612"/>
        <dbReference type="Rhea" id="RHEA-COMP:9561"/>
        <dbReference type="Rhea" id="RHEA-COMP:9562"/>
        <dbReference type="ChEBI" id="CHEBI:15378"/>
        <dbReference type="ChEBI" id="CHEBI:17757"/>
        <dbReference type="ChEBI" id="CHEBI:57783"/>
        <dbReference type="ChEBI" id="CHEBI:58349"/>
        <dbReference type="ChEBI" id="CHEBI:62192"/>
    </reaction>
</comment>
<comment type="subunit">
    <text evidence="1">NDH-1 can be composed of about 15 different subunits; different subcomplexes with different compositions have been identified which probably have different functions.</text>
</comment>
<comment type="subcellular location">
    <subcellularLocation>
        <location evidence="1">Cellular thylakoid membrane</location>
        <topology evidence="1">Peripheral membrane protein</topology>
        <orientation evidence="1">Cytoplasmic side</orientation>
    </subcellularLocation>
</comment>
<comment type="similarity">
    <text evidence="1">Belongs to the complex I NdhN subunit family.</text>
</comment>
<reference key="1">
    <citation type="journal article" date="2003" name="Nature">
        <title>Genome divergence in two Prochlorococcus ecotypes reflects oceanic niche differentiation.</title>
        <authorList>
            <person name="Rocap G."/>
            <person name="Larimer F.W."/>
            <person name="Lamerdin J.E."/>
            <person name="Malfatti S."/>
            <person name="Chain P."/>
            <person name="Ahlgren N.A."/>
            <person name="Arellano A."/>
            <person name="Coleman M."/>
            <person name="Hauser L."/>
            <person name="Hess W.R."/>
            <person name="Johnson Z.I."/>
            <person name="Land M.L."/>
            <person name="Lindell D."/>
            <person name="Post A.F."/>
            <person name="Regala W."/>
            <person name="Shah M."/>
            <person name="Shaw S.L."/>
            <person name="Steglich C."/>
            <person name="Sullivan M.B."/>
            <person name="Ting C.S."/>
            <person name="Tolonen A."/>
            <person name="Webb E.A."/>
            <person name="Zinser E.R."/>
            <person name="Chisholm S.W."/>
        </authorList>
    </citation>
    <scope>NUCLEOTIDE SEQUENCE [LARGE SCALE GENOMIC DNA]</scope>
    <source>
        <strain>CCMP1986 / NIES-2087 / MED4</strain>
    </source>
</reference>
<proteinExistence type="inferred from homology"/>
<gene>
    <name evidence="1" type="primary">ndhN</name>
    <name type="ordered locus">PMM1559</name>
</gene>
<evidence type="ECO:0000255" key="1">
    <source>
        <dbReference type="HAMAP-Rule" id="MF_01353"/>
    </source>
</evidence>
<feature type="chain" id="PRO_0000352230" description="NAD(P)H-quinone oxidoreductase subunit N">
    <location>
        <begin position="1"/>
        <end position="156"/>
    </location>
</feature>
<keyword id="KW-0472">Membrane</keyword>
<keyword id="KW-0520">NAD</keyword>
<keyword id="KW-0521">NADP</keyword>
<keyword id="KW-0618">Plastoquinone</keyword>
<keyword id="KW-0874">Quinone</keyword>
<keyword id="KW-0793">Thylakoid</keyword>
<keyword id="KW-1278">Translocase</keyword>
<keyword id="KW-0813">Transport</keyword>
<name>NDHN_PROMP</name>
<organism>
    <name type="scientific">Prochlorococcus marinus subsp. pastoris (strain CCMP1986 / NIES-2087 / MED4)</name>
    <dbReference type="NCBI Taxonomy" id="59919"/>
    <lineage>
        <taxon>Bacteria</taxon>
        <taxon>Bacillati</taxon>
        <taxon>Cyanobacteriota</taxon>
        <taxon>Cyanophyceae</taxon>
        <taxon>Synechococcales</taxon>
        <taxon>Prochlorococcaceae</taxon>
        <taxon>Prochlorococcus</taxon>
    </lineage>
</organism>
<accession>Q7UZU6</accession>